<comment type="function">
    <text evidence="1">Binds to 23S rRNA. Forms part of two intersubunit bridges in the 70S ribosome.</text>
</comment>
<comment type="subunit">
    <text evidence="1">Part of the 50S ribosomal subunit. Forms a cluster with proteins L3 and L19. In the 70S ribosome, L14 and L19 interact and together make contacts with the 16S rRNA in bridges B5 and B8.</text>
</comment>
<comment type="similarity">
    <text evidence="1">Belongs to the universal ribosomal protein uL14 family.</text>
</comment>
<dbReference type="EMBL" id="CP000111">
    <property type="protein sequence ID" value="ABB50701.1"/>
    <property type="molecule type" value="Genomic_DNA"/>
</dbReference>
<dbReference type="RefSeq" id="WP_002807235.1">
    <property type="nucleotide sequence ID" value="NC_007577.1"/>
</dbReference>
<dbReference type="SMR" id="Q318J4"/>
<dbReference type="STRING" id="74546.PMT9312_1640"/>
<dbReference type="KEGG" id="pmi:PMT9312_1640"/>
<dbReference type="eggNOG" id="COG0093">
    <property type="taxonomic scope" value="Bacteria"/>
</dbReference>
<dbReference type="HOGENOM" id="CLU_095071_2_1_3"/>
<dbReference type="OrthoDB" id="9806379at2"/>
<dbReference type="Proteomes" id="UP000002715">
    <property type="component" value="Chromosome"/>
</dbReference>
<dbReference type="GO" id="GO:0022625">
    <property type="term" value="C:cytosolic large ribosomal subunit"/>
    <property type="evidence" value="ECO:0007669"/>
    <property type="project" value="TreeGrafter"/>
</dbReference>
<dbReference type="GO" id="GO:0070180">
    <property type="term" value="F:large ribosomal subunit rRNA binding"/>
    <property type="evidence" value="ECO:0007669"/>
    <property type="project" value="TreeGrafter"/>
</dbReference>
<dbReference type="GO" id="GO:0003735">
    <property type="term" value="F:structural constituent of ribosome"/>
    <property type="evidence" value="ECO:0007669"/>
    <property type="project" value="InterPro"/>
</dbReference>
<dbReference type="GO" id="GO:0006412">
    <property type="term" value="P:translation"/>
    <property type="evidence" value="ECO:0007669"/>
    <property type="project" value="UniProtKB-UniRule"/>
</dbReference>
<dbReference type="CDD" id="cd00337">
    <property type="entry name" value="Ribosomal_uL14"/>
    <property type="match status" value="1"/>
</dbReference>
<dbReference type="FunFam" id="2.40.150.20:FF:000001">
    <property type="entry name" value="50S ribosomal protein L14"/>
    <property type="match status" value="1"/>
</dbReference>
<dbReference type="Gene3D" id="2.40.150.20">
    <property type="entry name" value="Ribosomal protein L14"/>
    <property type="match status" value="1"/>
</dbReference>
<dbReference type="HAMAP" id="MF_01367">
    <property type="entry name" value="Ribosomal_uL14"/>
    <property type="match status" value="1"/>
</dbReference>
<dbReference type="InterPro" id="IPR000218">
    <property type="entry name" value="Ribosomal_uL14"/>
</dbReference>
<dbReference type="InterPro" id="IPR005745">
    <property type="entry name" value="Ribosomal_uL14_bac-type"/>
</dbReference>
<dbReference type="InterPro" id="IPR036853">
    <property type="entry name" value="Ribosomal_uL14_sf"/>
</dbReference>
<dbReference type="NCBIfam" id="TIGR01067">
    <property type="entry name" value="rplN_bact"/>
    <property type="match status" value="1"/>
</dbReference>
<dbReference type="PANTHER" id="PTHR11761">
    <property type="entry name" value="50S/60S RIBOSOMAL PROTEIN L14/L23"/>
    <property type="match status" value="1"/>
</dbReference>
<dbReference type="PANTHER" id="PTHR11761:SF3">
    <property type="entry name" value="LARGE RIBOSOMAL SUBUNIT PROTEIN UL14M"/>
    <property type="match status" value="1"/>
</dbReference>
<dbReference type="Pfam" id="PF00238">
    <property type="entry name" value="Ribosomal_L14"/>
    <property type="match status" value="1"/>
</dbReference>
<dbReference type="SMART" id="SM01374">
    <property type="entry name" value="Ribosomal_L14"/>
    <property type="match status" value="1"/>
</dbReference>
<dbReference type="SUPFAM" id="SSF50193">
    <property type="entry name" value="Ribosomal protein L14"/>
    <property type="match status" value="1"/>
</dbReference>
<protein>
    <recommendedName>
        <fullName evidence="1">Large ribosomal subunit protein uL14</fullName>
    </recommendedName>
    <alternativeName>
        <fullName evidence="2">50S ribosomal protein L14</fullName>
    </alternativeName>
</protein>
<gene>
    <name evidence="1" type="primary">rplN</name>
    <name evidence="1" type="synonym">rpl14</name>
    <name type="ordered locus">PMT9312_1640</name>
</gene>
<keyword id="KW-0687">Ribonucleoprotein</keyword>
<keyword id="KW-0689">Ribosomal protein</keyword>
<keyword id="KW-0694">RNA-binding</keyword>
<keyword id="KW-0699">rRNA-binding</keyword>
<proteinExistence type="inferred from homology"/>
<name>RL14_PROM9</name>
<feature type="chain" id="PRO_0000266521" description="Large ribosomal subunit protein uL14">
    <location>
        <begin position="1"/>
        <end position="121"/>
    </location>
</feature>
<sequence>MIQQETYLTVADNSGAKRLQCIRVLGSNRRYAHVGDVIVATVKDALPNMGVKKSEVVKAVIVRTKATLRRNTGNSIRFDDNAAVLINEDKNPKGTRVFGPVARELRDKNYTKIVSLAPEVI</sequence>
<evidence type="ECO:0000255" key="1">
    <source>
        <dbReference type="HAMAP-Rule" id="MF_01367"/>
    </source>
</evidence>
<evidence type="ECO:0000305" key="2"/>
<organism>
    <name type="scientific">Prochlorococcus marinus (strain MIT 9312)</name>
    <dbReference type="NCBI Taxonomy" id="74546"/>
    <lineage>
        <taxon>Bacteria</taxon>
        <taxon>Bacillati</taxon>
        <taxon>Cyanobacteriota</taxon>
        <taxon>Cyanophyceae</taxon>
        <taxon>Synechococcales</taxon>
        <taxon>Prochlorococcaceae</taxon>
        <taxon>Prochlorococcus</taxon>
    </lineage>
</organism>
<accession>Q318J4</accession>
<reference key="1">
    <citation type="journal article" date="2006" name="Science">
        <title>Genomic islands and the ecology and evolution of Prochlorococcus.</title>
        <authorList>
            <person name="Coleman M.L."/>
            <person name="Sullivan M.B."/>
            <person name="Martiny A.C."/>
            <person name="Steglich C."/>
            <person name="Barry K."/>
            <person name="Delong E.F."/>
            <person name="Chisholm S.W."/>
        </authorList>
    </citation>
    <scope>NUCLEOTIDE SEQUENCE [LARGE SCALE GENOMIC DNA]</scope>
    <source>
        <strain>MIT 9312</strain>
    </source>
</reference>